<gene>
    <name evidence="1" type="primary">proS</name>
    <name type="ordered locus">VC0395_A0400</name>
    <name type="ordered locus">VC395_0891</name>
</gene>
<feature type="chain" id="PRO_1000073593" description="Proline--tRNA ligase">
    <location>
        <begin position="1"/>
        <end position="571"/>
    </location>
</feature>
<comment type="function">
    <text evidence="1">Catalyzes the attachment of proline to tRNA(Pro) in a two-step reaction: proline is first activated by ATP to form Pro-AMP and then transferred to the acceptor end of tRNA(Pro). As ProRS can inadvertently accommodate and process non-cognate amino acids such as alanine and cysteine, to avoid such errors it has two additional distinct editing activities against alanine. One activity is designated as 'pretransfer' editing and involves the tRNA(Pro)-independent hydrolysis of activated Ala-AMP. The other activity is designated 'posttransfer' editing and involves deacylation of mischarged Ala-tRNA(Pro). The misacylated Cys-tRNA(Pro) is not edited by ProRS.</text>
</comment>
<comment type="catalytic activity">
    <reaction evidence="1">
        <text>tRNA(Pro) + L-proline + ATP = L-prolyl-tRNA(Pro) + AMP + diphosphate</text>
        <dbReference type="Rhea" id="RHEA:14305"/>
        <dbReference type="Rhea" id="RHEA-COMP:9700"/>
        <dbReference type="Rhea" id="RHEA-COMP:9702"/>
        <dbReference type="ChEBI" id="CHEBI:30616"/>
        <dbReference type="ChEBI" id="CHEBI:33019"/>
        <dbReference type="ChEBI" id="CHEBI:60039"/>
        <dbReference type="ChEBI" id="CHEBI:78442"/>
        <dbReference type="ChEBI" id="CHEBI:78532"/>
        <dbReference type="ChEBI" id="CHEBI:456215"/>
        <dbReference type="EC" id="6.1.1.15"/>
    </reaction>
</comment>
<comment type="subunit">
    <text evidence="1">Homodimer.</text>
</comment>
<comment type="subcellular location">
    <subcellularLocation>
        <location evidence="1">Cytoplasm</location>
    </subcellularLocation>
</comment>
<comment type="domain">
    <text evidence="1">Consists of three domains: the N-terminal catalytic domain, the editing domain and the C-terminal anticodon-binding domain.</text>
</comment>
<comment type="similarity">
    <text evidence="1">Belongs to the class-II aminoacyl-tRNA synthetase family. ProS type 1 subfamily.</text>
</comment>
<keyword id="KW-0030">Aminoacyl-tRNA synthetase</keyword>
<keyword id="KW-0067">ATP-binding</keyword>
<keyword id="KW-0963">Cytoplasm</keyword>
<keyword id="KW-0436">Ligase</keyword>
<keyword id="KW-0547">Nucleotide-binding</keyword>
<keyword id="KW-0648">Protein biosynthesis</keyword>
<proteinExistence type="inferred from homology"/>
<sequence length="571" mass="63251">MRTSNYLLSTLKETPNDAEVVSHKLMLRAGMIRKLASGLYTWLPTGLRVLRKVENIVRQEIDNAGAIETLMPVVQPFELWEETGRSEKMGPELLRFTDRHERPFVLSPTAEEVITALVRNEVSSYKQLPLNLYQIQTKFRDERRPRFGVMRAREFCMMDAYSFDIDKAGLEKSYEAMHVAYCKAFDRMGLDYRPVLADTGAIGGNGSHEFHVLAESGEDLIAFSTESDYAANIEKAEAVAPAIERPAPTQAMTLVDTPNAKTIAELVEQHGLPIEKTVKTLFVKASDEIDAPIVALIIRGDHELNEIKAEKLAEVASPLEMASEEEIRALIGAGPGSLGPVGLKLPFIVDRTVAVMNDFGAGANIDGKHYFGINWGRDVELGKVEDLRNVVEGDPSPCGKGTLMLKRGIEVGHIFQLGTNYSEKMNCGVLDSNGKNVILEMGCYGIGVSRVVAAAIEQNHDDYGIIWPDAIAPFQVAIVPMNMHKSERVQQAAEKLYAELTAAGIEVLFDDRKERPGVMFSDMELIGVPHTIIIGDRSMDEGHFEYKNRRQGEKEAVAMESIIDFIQAKLA</sequence>
<name>SYP_VIBC3</name>
<organism>
    <name type="scientific">Vibrio cholerae serotype O1 (strain ATCC 39541 / Classical Ogawa 395 / O395)</name>
    <dbReference type="NCBI Taxonomy" id="345073"/>
    <lineage>
        <taxon>Bacteria</taxon>
        <taxon>Pseudomonadati</taxon>
        <taxon>Pseudomonadota</taxon>
        <taxon>Gammaproteobacteria</taxon>
        <taxon>Vibrionales</taxon>
        <taxon>Vibrionaceae</taxon>
        <taxon>Vibrio</taxon>
    </lineage>
</organism>
<evidence type="ECO:0000255" key="1">
    <source>
        <dbReference type="HAMAP-Rule" id="MF_01569"/>
    </source>
</evidence>
<protein>
    <recommendedName>
        <fullName evidence="1">Proline--tRNA ligase</fullName>
        <ecNumber evidence="1">6.1.1.15</ecNumber>
    </recommendedName>
    <alternativeName>
        <fullName evidence="1">Prolyl-tRNA synthetase</fullName>
        <shortName evidence="1">ProRS</shortName>
    </alternativeName>
</protein>
<reference key="1">
    <citation type="submission" date="2007-03" db="EMBL/GenBank/DDBJ databases">
        <authorList>
            <person name="Heidelberg J."/>
        </authorList>
    </citation>
    <scope>NUCLEOTIDE SEQUENCE [LARGE SCALE GENOMIC DNA]</scope>
    <source>
        <strain>ATCC 39541 / Classical Ogawa 395 / O395</strain>
    </source>
</reference>
<reference key="2">
    <citation type="journal article" date="2008" name="PLoS ONE">
        <title>A recalibrated molecular clock and independent origins for the cholera pandemic clones.</title>
        <authorList>
            <person name="Feng L."/>
            <person name="Reeves P.R."/>
            <person name="Lan R."/>
            <person name="Ren Y."/>
            <person name="Gao C."/>
            <person name="Zhou Z."/>
            <person name="Ren Y."/>
            <person name="Cheng J."/>
            <person name="Wang W."/>
            <person name="Wang J."/>
            <person name="Qian W."/>
            <person name="Li D."/>
            <person name="Wang L."/>
        </authorList>
    </citation>
    <scope>NUCLEOTIDE SEQUENCE [LARGE SCALE GENOMIC DNA]</scope>
    <source>
        <strain>ATCC 39541 / Classical Ogawa 395 / O395</strain>
    </source>
</reference>
<accession>A5F340</accession>
<accession>C3LYN9</accession>
<dbReference type="EC" id="6.1.1.15" evidence="1"/>
<dbReference type="EMBL" id="CP000627">
    <property type="protein sequence ID" value="ABQ19580.1"/>
    <property type="molecule type" value="Genomic_DNA"/>
</dbReference>
<dbReference type="EMBL" id="CP001235">
    <property type="protein sequence ID" value="ACP08905.1"/>
    <property type="molecule type" value="Genomic_DNA"/>
</dbReference>
<dbReference type="RefSeq" id="WP_001260664.1">
    <property type="nucleotide sequence ID" value="NZ_JAACZH010000033.1"/>
</dbReference>
<dbReference type="SMR" id="A5F340"/>
<dbReference type="KEGG" id="vco:VC0395_A0400"/>
<dbReference type="KEGG" id="vcr:VC395_0891"/>
<dbReference type="PATRIC" id="fig|345073.21.peg.863"/>
<dbReference type="eggNOG" id="COG0442">
    <property type="taxonomic scope" value="Bacteria"/>
</dbReference>
<dbReference type="HOGENOM" id="CLU_016739_0_0_6"/>
<dbReference type="OrthoDB" id="9809052at2"/>
<dbReference type="Proteomes" id="UP000000249">
    <property type="component" value="Chromosome 2"/>
</dbReference>
<dbReference type="GO" id="GO:0005829">
    <property type="term" value="C:cytosol"/>
    <property type="evidence" value="ECO:0007669"/>
    <property type="project" value="TreeGrafter"/>
</dbReference>
<dbReference type="GO" id="GO:0002161">
    <property type="term" value="F:aminoacyl-tRNA deacylase activity"/>
    <property type="evidence" value="ECO:0007669"/>
    <property type="project" value="InterPro"/>
</dbReference>
<dbReference type="GO" id="GO:0005524">
    <property type="term" value="F:ATP binding"/>
    <property type="evidence" value="ECO:0007669"/>
    <property type="project" value="UniProtKB-UniRule"/>
</dbReference>
<dbReference type="GO" id="GO:0004827">
    <property type="term" value="F:proline-tRNA ligase activity"/>
    <property type="evidence" value="ECO:0007669"/>
    <property type="project" value="UniProtKB-UniRule"/>
</dbReference>
<dbReference type="GO" id="GO:0006433">
    <property type="term" value="P:prolyl-tRNA aminoacylation"/>
    <property type="evidence" value="ECO:0007669"/>
    <property type="project" value="UniProtKB-UniRule"/>
</dbReference>
<dbReference type="CDD" id="cd04334">
    <property type="entry name" value="ProRS-INS"/>
    <property type="match status" value="1"/>
</dbReference>
<dbReference type="CDD" id="cd00861">
    <property type="entry name" value="ProRS_anticodon_short"/>
    <property type="match status" value="1"/>
</dbReference>
<dbReference type="CDD" id="cd00779">
    <property type="entry name" value="ProRS_core_prok"/>
    <property type="match status" value="1"/>
</dbReference>
<dbReference type="FunFam" id="3.30.930.10:FF:000012">
    <property type="entry name" value="Proline--tRNA ligase"/>
    <property type="match status" value="1"/>
</dbReference>
<dbReference type="FunFam" id="3.30.930.10:FF:000015">
    <property type="entry name" value="Proline--tRNA ligase"/>
    <property type="match status" value="1"/>
</dbReference>
<dbReference type="FunFam" id="3.40.50.800:FF:000006">
    <property type="entry name" value="Proline--tRNA ligase"/>
    <property type="match status" value="1"/>
</dbReference>
<dbReference type="FunFam" id="3.90.960.10:FF:000001">
    <property type="entry name" value="Proline--tRNA ligase"/>
    <property type="match status" value="1"/>
</dbReference>
<dbReference type="Gene3D" id="3.40.50.800">
    <property type="entry name" value="Anticodon-binding domain"/>
    <property type="match status" value="1"/>
</dbReference>
<dbReference type="Gene3D" id="3.30.930.10">
    <property type="entry name" value="Bira Bifunctional Protein, Domain 2"/>
    <property type="match status" value="2"/>
</dbReference>
<dbReference type="Gene3D" id="3.90.960.10">
    <property type="entry name" value="YbaK/aminoacyl-tRNA synthetase-associated domain"/>
    <property type="match status" value="1"/>
</dbReference>
<dbReference type="HAMAP" id="MF_01569">
    <property type="entry name" value="Pro_tRNA_synth_type1"/>
    <property type="match status" value="1"/>
</dbReference>
<dbReference type="InterPro" id="IPR002314">
    <property type="entry name" value="aa-tRNA-synt_IIb"/>
</dbReference>
<dbReference type="InterPro" id="IPR006195">
    <property type="entry name" value="aa-tRNA-synth_II"/>
</dbReference>
<dbReference type="InterPro" id="IPR045864">
    <property type="entry name" value="aa-tRNA-synth_II/BPL/LPL"/>
</dbReference>
<dbReference type="InterPro" id="IPR004154">
    <property type="entry name" value="Anticodon-bd"/>
</dbReference>
<dbReference type="InterPro" id="IPR036621">
    <property type="entry name" value="Anticodon-bd_dom_sf"/>
</dbReference>
<dbReference type="InterPro" id="IPR002316">
    <property type="entry name" value="Pro-tRNA-ligase_IIa"/>
</dbReference>
<dbReference type="InterPro" id="IPR004500">
    <property type="entry name" value="Pro-tRNA-synth_IIa_bac-type"/>
</dbReference>
<dbReference type="InterPro" id="IPR023717">
    <property type="entry name" value="Pro-tRNA-Synthase_IIa_type1"/>
</dbReference>
<dbReference type="InterPro" id="IPR050062">
    <property type="entry name" value="Pro-tRNA_synthetase"/>
</dbReference>
<dbReference type="InterPro" id="IPR044140">
    <property type="entry name" value="ProRS_anticodon_short"/>
</dbReference>
<dbReference type="InterPro" id="IPR033730">
    <property type="entry name" value="ProRS_core_prok"/>
</dbReference>
<dbReference type="InterPro" id="IPR036754">
    <property type="entry name" value="YbaK/aa-tRNA-synt-asso_dom_sf"/>
</dbReference>
<dbReference type="InterPro" id="IPR007214">
    <property type="entry name" value="YbaK/aa-tRNA-synth-assoc-dom"/>
</dbReference>
<dbReference type="NCBIfam" id="NF006625">
    <property type="entry name" value="PRK09194.1"/>
    <property type="match status" value="1"/>
</dbReference>
<dbReference type="NCBIfam" id="TIGR00409">
    <property type="entry name" value="proS_fam_II"/>
    <property type="match status" value="1"/>
</dbReference>
<dbReference type="PANTHER" id="PTHR42753">
    <property type="entry name" value="MITOCHONDRIAL RIBOSOME PROTEIN L39/PROLYL-TRNA LIGASE FAMILY MEMBER"/>
    <property type="match status" value="1"/>
</dbReference>
<dbReference type="PANTHER" id="PTHR42753:SF2">
    <property type="entry name" value="PROLINE--TRNA LIGASE"/>
    <property type="match status" value="1"/>
</dbReference>
<dbReference type="Pfam" id="PF03129">
    <property type="entry name" value="HGTP_anticodon"/>
    <property type="match status" value="1"/>
</dbReference>
<dbReference type="Pfam" id="PF00587">
    <property type="entry name" value="tRNA-synt_2b"/>
    <property type="match status" value="1"/>
</dbReference>
<dbReference type="Pfam" id="PF04073">
    <property type="entry name" value="tRNA_edit"/>
    <property type="match status" value="1"/>
</dbReference>
<dbReference type="PIRSF" id="PIRSF001535">
    <property type="entry name" value="ProRS_1"/>
    <property type="match status" value="1"/>
</dbReference>
<dbReference type="PRINTS" id="PR01046">
    <property type="entry name" value="TRNASYNTHPRO"/>
</dbReference>
<dbReference type="SUPFAM" id="SSF52954">
    <property type="entry name" value="Class II aaRS ABD-related"/>
    <property type="match status" value="1"/>
</dbReference>
<dbReference type="SUPFAM" id="SSF55681">
    <property type="entry name" value="Class II aaRS and biotin synthetases"/>
    <property type="match status" value="1"/>
</dbReference>
<dbReference type="SUPFAM" id="SSF55826">
    <property type="entry name" value="YbaK/ProRS associated domain"/>
    <property type="match status" value="1"/>
</dbReference>
<dbReference type="PROSITE" id="PS50862">
    <property type="entry name" value="AA_TRNA_LIGASE_II"/>
    <property type="match status" value="1"/>
</dbReference>